<gene>
    <name evidence="1" type="primary">mltF</name>
    <name type="ordered locus">Ent638_3043</name>
</gene>
<name>MLTF_ENT38</name>
<accession>A4WDC7</accession>
<keyword id="KW-0998">Cell outer membrane</keyword>
<keyword id="KW-0961">Cell wall biogenesis/degradation</keyword>
<keyword id="KW-0456">Lyase</keyword>
<keyword id="KW-0472">Membrane</keyword>
<keyword id="KW-0732">Signal</keyword>
<sequence length="517" mass="58076">MKKFKINYLLIGIVTLLLAAALWPSIPWFGKAENRIAAIQSRGELRVSTLDSPLTYNNVNGKIIGLDYELAQQFADYLGVKLKITVRQNISQLFDDLDNDDADLLAAGLVYNSERSKNYQPGPTYYSVSQQVVYRVGGVRPRTMATLNDQQLTVAPGHVVIDDLRALKEKKYPDLSWKVDEKLGTTALLEQVKDKKLAYTIADSVAISFFQRVHPEIAVALDVTDEQPVTWFSPLDDDQTLSAAILDFFNSMNEEGTLARLEEKYLGHGGDFDYVDTRSFLRAVDSVLPDLQPLFEKYAEEIDWRLLAAISYQESHWDAQATSPTGVRGLMMLTKNTAQSLGLTDRTDAEQSISGGARYLQDMMAKVPDTVPEEERIWFALAAYNMGYAHMLDARALTAKTKGNPDSWSDVKQRLPLLSQKPLYNKLTYGYARGHEAYAYVENIRKYQISLVGYLMEKEKEVTKAKQIAQSYPVVSPHELNHPATTSILPFVAFSADGAFERNHLIAPNTLVQAPRR</sequence>
<reference key="1">
    <citation type="journal article" date="2010" name="PLoS Genet.">
        <title>Genome sequence of the plant growth promoting endophytic bacterium Enterobacter sp. 638.</title>
        <authorList>
            <person name="Taghavi S."/>
            <person name="van der Lelie D."/>
            <person name="Hoffman A."/>
            <person name="Zhang Y.B."/>
            <person name="Walla M.D."/>
            <person name="Vangronsveld J."/>
            <person name="Newman L."/>
            <person name="Monchy S."/>
        </authorList>
    </citation>
    <scope>NUCLEOTIDE SEQUENCE [LARGE SCALE GENOMIC DNA]</scope>
    <source>
        <strain>638</strain>
    </source>
</reference>
<comment type="function">
    <text evidence="1">Murein-degrading enzyme that degrades murein glycan strands and insoluble, high-molecular weight murein sacculi, with the concomitant formation of a 1,6-anhydromuramoyl product. Lytic transglycosylases (LTs) play an integral role in the metabolism of the peptidoglycan (PG) sacculus. Their lytic action creates space within the PG sacculus to allow for its expansion as well as for the insertion of various structures such as secretion systems and flagella.</text>
</comment>
<comment type="catalytic activity">
    <reaction evidence="1">
        <text>Exolytic cleavage of the (1-&gt;4)-beta-glycosidic linkage between N-acetylmuramic acid (MurNAc) and N-acetylglucosamine (GlcNAc) residues in peptidoglycan, from either the reducing or the non-reducing ends of the peptidoglycan chains, with concomitant formation of a 1,6-anhydrobond in the MurNAc residue.</text>
        <dbReference type="EC" id="4.2.2.n1"/>
    </reaction>
</comment>
<comment type="subcellular location">
    <subcellularLocation>
        <location>Cell outer membrane</location>
        <topology>Peripheral membrane protein</topology>
    </subcellularLocation>
    <text evidence="1">Attached to the inner leaflet of the outer membrane.</text>
</comment>
<comment type="domain">
    <text evidence="1">The N-terminal domain does not have lytic activity and probably modulates enzymatic activity. The C-terminal domain is the catalytic active domain.</text>
</comment>
<comment type="similarity">
    <text evidence="1">In the N-terminal section; belongs to the bacterial solute-binding protein 3 family.</text>
</comment>
<comment type="similarity">
    <text evidence="1">In the C-terminal section; belongs to the transglycosylase Slt family.</text>
</comment>
<dbReference type="EC" id="4.2.2.n1" evidence="1"/>
<dbReference type="EMBL" id="CP000653">
    <property type="protein sequence ID" value="ABP61707.1"/>
    <property type="molecule type" value="Genomic_DNA"/>
</dbReference>
<dbReference type="RefSeq" id="WP_015960037.1">
    <property type="nucleotide sequence ID" value="NC_009436.1"/>
</dbReference>
<dbReference type="SMR" id="A4WDC7"/>
<dbReference type="STRING" id="399742.Ent638_3043"/>
<dbReference type="CAZy" id="GH23">
    <property type="family name" value="Glycoside Hydrolase Family 23"/>
</dbReference>
<dbReference type="KEGG" id="ent:Ent638_3043"/>
<dbReference type="eggNOG" id="COG4623">
    <property type="taxonomic scope" value="Bacteria"/>
</dbReference>
<dbReference type="HOGENOM" id="CLU_027494_0_1_6"/>
<dbReference type="OrthoDB" id="9815002at2"/>
<dbReference type="Proteomes" id="UP000000230">
    <property type="component" value="Chromosome"/>
</dbReference>
<dbReference type="GO" id="GO:0009279">
    <property type="term" value="C:cell outer membrane"/>
    <property type="evidence" value="ECO:0007669"/>
    <property type="project" value="UniProtKB-SubCell"/>
</dbReference>
<dbReference type="GO" id="GO:0008933">
    <property type="term" value="F:peptidoglycan lytic transglycosylase activity"/>
    <property type="evidence" value="ECO:0007669"/>
    <property type="project" value="UniProtKB-UniRule"/>
</dbReference>
<dbReference type="GO" id="GO:0016998">
    <property type="term" value="P:cell wall macromolecule catabolic process"/>
    <property type="evidence" value="ECO:0007669"/>
    <property type="project" value="UniProtKB-UniRule"/>
</dbReference>
<dbReference type="GO" id="GO:0071555">
    <property type="term" value="P:cell wall organization"/>
    <property type="evidence" value="ECO:0007669"/>
    <property type="project" value="UniProtKB-KW"/>
</dbReference>
<dbReference type="GO" id="GO:0009253">
    <property type="term" value="P:peptidoglycan catabolic process"/>
    <property type="evidence" value="ECO:0007669"/>
    <property type="project" value="TreeGrafter"/>
</dbReference>
<dbReference type="CDD" id="cd13403">
    <property type="entry name" value="MLTF-like"/>
    <property type="match status" value="1"/>
</dbReference>
<dbReference type="CDD" id="cd01009">
    <property type="entry name" value="PBP2_YfhD_N"/>
    <property type="match status" value="1"/>
</dbReference>
<dbReference type="FunFam" id="1.10.530.10:FF:000003">
    <property type="entry name" value="Membrane-bound lytic murein transglycosylase F"/>
    <property type="match status" value="1"/>
</dbReference>
<dbReference type="Gene3D" id="1.10.530.10">
    <property type="match status" value="1"/>
</dbReference>
<dbReference type="Gene3D" id="3.40.190.10">
    <property type="entry name" value="Periplasmic binding protein-like II"/>
    <property type="match status" value="2"/>
</dbReference>
<dbReference type="HAMAP" id="MF_02016">
    <property type="entry name" value="MltF"/>
    <property type="match status" value="1"/>
</dbReference>
<dbReference type="InterPro" id="IPR023346">
    <property type="entry name" value="Lysozyme-like_dom_sf"/>
</dbReference>
<dbReference type="InterPro" id="IPR023703">
    <property type="entry name" value="MltF"/>
</dbReference>
<dbReference type="InterPro" id="IPR001638">
    <property type="entry name" value="Solute-binding_3/MltF_N"/>
</dbReference>
<dbReference type="InterPro" id="IPR000189">
    <property type="entry name" value="Transglyc_AS"/>
</dbReference>
<dbReference type="InterPro" id="IPR008258">
    <property type="entry name" value="Transglycosylase_SLT_dom_1"/>
</dbReference>
<dbReference type="NCBIfam" id="NF008112">
    <property type="entry name" value="PRK10859.1"/>
    <property type="match status" value="1"/>
</dbReference>
<dbReference type="PANTHER" id="PTHR35936">
    <property type="entry name" value="MEMBRANE-BOUND LYTIC MUREIN TRANSGLYCOSYLASE F"/>
    <property type="match status" value="1"/>
</dbReference>
<dbReference type="PANTHER" id="PTHR35936:SF32">
    <property type="entry name" value="MEMBRANE-BOUND LYTIC MUREIN TRANSGLYCOSYLASE F"/>
    <property type="match status" value="1"/>
</dbReference>
<dbReference type="Pfam" id="PF00497">
    <property type="entry name" value="SBP_bac_3"/>
    <property type="match status" value="1"/>
</dbReference>
<dbReference type="Pfam" id="PF01464">
    <property type="entry name" value="SLT"/>
    <property type="match status" value="1"/>
</dbReference>
<dbReference type="SMART" id="SM00062">
    <property type="entry name" value="PBPb"/>
    <property type="match status" value="1"/>
</dbReference>
<dbReference type="SUPFAM" id="SSF53955">
    <property type="entry name" value="Lysozyme-like"/>
    <property type="match status" value="1"/>
</dbReference>
<dbReference type="SUPFAM" id="SSF53850">
    <property type="entry name" value="Periplasmic binding protein-like II"/>
    <property type="match status" value="1"/>
</dbReference>
<dbReference type="PROSITE" id="PS00922">
    <property type="entry name" value="TRANSGLYCOSYLASE"/>
    <property type="match status" value="1"/>
</dbReference>
<evidence type="ECO:0000255" key="1">
    <source>
        <dbReference type="HAMAP-Rule" id="MF_02016"/>
    </source>
</evidence>
<organism>
    <name type="scientific">Enterobacter sp. (strain 638)</name>
    <dbReference type="NCBI Taxonomy" id="399742"/>
    <lineage>
        <taxon>Bacteria</taxon>
        <taxon>Pseudomonadati</taxon>
        <taxon>Pseudomonadota</taxon>
        <taxon>Gammaproteobacteria</taxon>
        <taxon>Enterobacterales</taxon>
        <taxon>Enterobacteriaceae</taxon>
        <taxon>Enterobacter</taxon>
    </lineage>
</organism>
<protein>
    <recommendedName>
        <fullName evidence="1">Membrane-bound lytic murein transglycosylase F</fullName>
        <ecNumber evidence="1">4.2.2.n1</ecNumber>
    </recommendedName>
    <alternativeName>
        <fullName evidence="1">Murein lyase F</fullName>
    </alternativeName>
</protein>
<feature type="signal peptide" evidence="1">
    <location>
        <begin position="1"/>
        <end position="32"/>
    </location>
</feature>
<feature type="chain" id="PRO_5000238093" description="Membrane-bound lytic murein transglycosylase F">
    <location>
        <begin position="33"/>
        <end position="517"/>
    </location>
</feature>
<feature type="region of interest" description="Non-LT domain" evidence="1">
    <location>
        <begin position="33"/>
        <end position="269"/>
    </location>
</feature>
<feature type="region of interest" description="LT domain" evidence="1">
    <location>
        <begin position="270"/>
        <end position="517"/>
    </location>
</feature>
<feature type="active site" evidence="1">
    <location>
        <position position="314"/>
    </location>
</feature>
<proteinExistence type="inferred from homology"/>